<gene>
    <name type="primary">MT-CYB</name>
    <name type="synonym">COB</name>
    <name type="synonym">CYTB</name>
    <name type="synonym">MTCYB</name>
</gene>
<feature type="chain" id="PRO_0000255029" description="Cytochrome b">
    <location>
        <begin position="1"/>
        <end position="379"/>
    </location>
</feature>
<feature type="transmembrane region" description="Helical" evidence="2">
    <location>
        <begin position="33"/>
        <end position="53"/>
    </location>
</feature>
<feature type="transmembrane region" description="Helical" evidence="2">
    <location>
        <begin position="77"/>
        <end position="98"/>
    </location>
</feature>
<feature type="transmembrane region" description="Helical" evidence="2">
    <location>
        <begin position="113"/>
        <end position="133"/>
    </location>
</feature>
<feature type="transmembrane region" description="Helical" evidence="2">
    <location>
        <begin position="178"/>
        <end position="198"/>
    </location>
</feature>
<feature type="transmembrane region" description="Helical" evidence="2">
    <location>
        <begin position="226"/>
        <end position="246"/>
    </location>
</feature>
<feature type="transmembrane region" description="Helical" evidence="2">
    <location>
        <begin position="288"/>
        <end position="308"/>
    </location>
</feature>
<feature type="transmembrane region" description="Helical" evidence="2">
    <location>
        <begin position="320"/>
        <end position="340"/>
    </location>
</feature>
<feature type="transmembrane region" description="Helical" evidence="2">
    <location>
        <begin position="347"/>
        <end position="367"/>
    </location>
</feature>
<feature type="binding site" description="axial binding residue" evidence="2">
    <location>
        <position position="83"/>
    </location>
    <ligand>
        <name>heme b</name>
        <dbReference type="ChEBI" id="CHEBI:60344"/>
        <label>b562</label>
    </ligand>
    <ligandPart>
        <name>Fe</name>
        <dbReference type="ChEBI" id="CHEBI:18248"/>
    </ligandPart>
</feature>
<feature type="binding site" description="axial binding residue" evidence="2">
    <location>
        <position position="97"/>
    </location>
    <ligand>
        <name>heme b</name>
        <dbReference type="ChEBI" id="CHEBI:60344"/>
        <label>b566</label>
    </ligand>
    <ligandPart>
        <name>Fe</name>
        <dbReference type="ChEBI" id="CHEBI:18248"/>
    </ligandPart>
</feature>
<feature type="binding site" description="axial binding residue" evidence="2">
    <location>
        <position position="182"/>
    </location>
    <ligand>
        <name>heme b</name>
        <dbReference type="ChEBI" id="CHEBI:60344"/>
        <label>b562</label>
    </ligand>
    <ligandPart>
        <name>Fe</name>
        <dbReference type="ChEBI" id="CHEBI:18248"/>
    </ligandPart>
</feature>
<feature type="binding site" description="axial binding residue" evidence="2">
    <location>
        <position position="196"/>
    </location>
    <ligand>
        <name>heme b</name>
        <dbReference type="ChEBI" id="CHEBI:60344"/>
        <label>b566</label>
    </ligand>
    <ligandPart>
        <name>Fe</name>
        <dbReference type="ChEBI" id="CHEBI:18248"/>
    </ligandPart>
</feature>
<feature type="binding site" evidence="2">
    <location>
        <position position="201"/>
    </location>
    <ligand>
        <name>a ubiquinone</name>
        <dbReference type="ChEBI" id="CHEBI:16389"/>
    </ligand>
</feature>
<feature type="sequence variant" description="In strain: Isolate I679.">
    <original>Y</original>
    <variation>H</variation>
    <location>
        <position position="345"/>
    </location>
</feature>
<reference key="1">
    <citation type="journal article" date="2001" name="Mol. Biol. Evol.">
        <title>Recurrent amplifications and deletions of satellite DNA accompanied chromosomal diversification in South American tuco-tucos (genus Ctenomys, Rodentia: Octodontidae): a phylogenetic approach.</title>
        <authorList>
            <person name="Slamovits C.H."/>
            <person name="Cook J.A."/>
            <person name="Lessa E.P."/>
            <person name="Rossi M.S."/>
        </authorList>
    </citation>
    <scope>NUCLEOTIDE SEQUENCE [GENOMIC DNA]</scope>
    <source>
        <strain>Isolate I679</strain>
        <strain>Isolate I867</strain>
        <strain>Isolate I990</strain>
    </source>
</reference>
<geneLocation type="mitochondrion"/>
<accession>Q94ND7</accession>
<accession>Q94WY4</accession>
<sequence>MTNMRKSHPLIKIVNHSFIDLPTPSNISAWWNFGSLLGVCLGLQILTGLFLAMHYTADTTTAFSSVTHICRDVNYGWLIRYMHANGASMFFIFLYFHIGRGIYYGSYTFMDTWNIGILLLFAVMATAFMGYVLPWGQMSFWGATVITNLLSAIPYIGLTLVEWIWGGFSVDKATLTRFFAFHFILPFIITAMVMIHLLFLHETGSNNPSGMNSDSDKIPFHPYYTIKDILGVLFMMIALMSLVMFSPDLLGDPDNYTPANPLNTPPHIKPEWYFLFAYAILRSIPNKLGGVLALAFSILILMLFPILHLSKQRSMSFRPLSQCLMWMLVANLMILTWIGGQPVEYPFIIIGQLASVTYFFTILILMPSTALMENKLLKW</sequence>
<name>CYB_CTETC</name>
<comment type="function">
    <text evidence="2">Component of the ubiquinol-cytochrome c reductase complex (complex III or cytochrome b-c1 complex) that is part of the mitochondrial respiratory chain. The b-c1 complex mediates electron transfer from ubiquinol to cytochrome c. Contributes to the generation of a proton gradient across the mitochondrial membrane that is then used for ATP synthesis.</text>
</comment>
<comment type="cofactor">
    <cofactor evidence="2">
        <name>heme b</name>
        <dbReference type="ChEBI" id="CHEBI:60344"/>
    </cofactor>
    <text evidence="2">Binds 2 heme b groups non-covalently.</text>
</comment>
<comment type="subunit">
    <text evidence="2">The cytochrome bc1 complex contains 11 subunits: 3 respiratory subunits (MT-CYB, CYC1 and UQCRFS1), 2 core proteins (UQCRC1 and UQCRC2) and 6 low-molecular weight proteins (UQCRH/QCR6, UQCRB/QCR7, UQCRQ/QCR8, UQCR10/QCR9, UQCR11/QCR10 and a cleavage product of UQCRFS1). This cytochrome bc1 complex then forms a dimer.</text>
</comment>
<comment type="subcellular location">
    <subcellularLocation>
        <location evidence="2">Mitochondrion inner membrane</location>
        <topology evidence="2">Multi-pass membrane protein</topology>
    </subcellularLocation>
</comment>
<comment type="miscellaneous">
    <text evidence="1">Heme 1 (or BL or b562) is low-potential and absorbs at about 562 nm, and heme 2 (or BH or b566) is high-potential and absorbs at about 566 nm.</text>
</comment>
<comment type="similarity">
    <text evidence="3 4">Belongs to the cytochrome b family.</text>
</comment>
<comment type="caution">
    <text evidence="2">The full-length protein contains only eight transmembrane helices, not nine as predicted by bioinformatics tools.</text>
</comment>
<organism>
    <name type="scientific">Ctenomys tuconax</name>
    <name type="common">Robust tuco-tuco</name>
    <dbReference type="NCBI Taxonomy" id="112857"/>
    <lineage>
        <taxon>Eukaryota</taxon>
        <taxon>Metazoa</taxon>
        <taxon>Chordata</taxon>
        <taxon>Craniata</taxon>
        <taxon>Vertebrata</taxon>
        <taxon>Euteleostomi</taxon>
        <taxon>Mammalia</taxon>
        <taxon>Eutheria</taxon>
        <taxon>Euarchontoglires</taxon>
        <taxon>Glires</taxon>
        <taxon>Rodentia</taxon>
        <taxon>Hystricomorpha</taxon>
        <taxon>Ctenomyidae</taxon>
        <taxon>Ctenomys</taxon>
    </lineage>
</organism>
<keyword id="KW-0249">Electron transport</keyword>
<keyword id="KW-0349">Heme</keyword>
<keyword id="KW-0408">Iron</keyword>
<keyword id="KW-0472">Membrane</keyword>
<keyword id="KW-0479">Metal-binding</keyword>
<keyword id="KW-0496">Mitochondrion</keyword>
<keyword id="KW-0999">Mitochondrion inner membrane</keyword>
<keyword id="KW-0679">Respiratory chain</keyword>
<keyword id="KW-0812">Transmembrane</keyword>
<keyword id="KW-1133">Transmembrane helix</keyword>
<keyword id="KW-0813">Transport</keyword>
<keyword id="KW-0830">Ubiquinone</keyword>
<evidence type="ECO:0000250" key="1"/>
<evidence type="ECO:0000250" key="2">
    <source>
        <dbReference type="UniProtKB" id="P00157"/>
    </source>
</evidence>
<evidence type="ECO:0000255" key="3">
    <source>
        <dbReference type="PROSITE-ProRule" id="PRU00967"/>
    </source>
</evidence>
<evidence type="ECO:0000255" key="4">
    <source>
        <dbReference type="PROSITE-ProRule" id="PRU00968"/>
    </source>
</evidence>
<protein>
    <recommendedName>
        <fullName>Cytochrome b</fullName>
    </recommendedName>
    <alternativeName>
        <fullName>Complex III subunit 3</fullName>
    </alternativeName>
    <alternativeName>
        <fullName>Complex III subunit III</fullName>
    </alternativeName>
    <alternativeName>
        <fullName>Cytochrome b-c1 complex subunit 3</fullName>
    </alternativeName>
    <alternativeName>
        <fullName>Ubiquinol-cytochrome-c reductase complex cytochrome b subunit</fullName>
    </alternativeName>
</protein>
<dbReference type="EMBL" id="AF370683">
    <property type="protein sequence ID" value="AAL01847.1"/>
    <property type="molecule type" value="Genomic_DNA"/>
</dbReference>
<dbReference type="EMBL" id="AF370684">
    <property type="protein sequence ID" value="AAL01848.1"/>
    <property type="molecule type" value="Genomic_DNA"/>
</dbReference>
<dbReference type="EMBL" id="AF370693">
    <property type="protein sequence ID" value="AAL01857.1"/>
    <property type="molecule type" value="Genomic_DNA"/>
</dbReference>
<dbReference type="SMR" id="Q94ND7"/>
<dbReference type="GO" id="GO:0005743">
    <property type="term" value="C:mitochondrial inner membrane"/>
    <property type="evidence" value="ECO:0007669"/>
    <property type="project" value="UniProtKB-SubCell"/>
</dbReference>
<dbReference type="GO" id="GO:0045275">
    <property type="term" value="C:respiratory chain complex III"/>
    <property type="evidence" value="ECO:0007669"/>
    <property type="project" value="InterPro"/>
</dbReference>
<dbReference type="GO" id="GO:0046872">
    <property type="term" value="F:metal ion binding"/>
    <property type="evidence" value="ECO:0007669"/>
    <property type="project" value="UniProtKB-KW"/>
</dbReference>
<dbReference type="GO" id="GO:0008121">
    <property type="term" value="F:ubiquinol-cytochrome-c reductase activity"/>
    <property type="evidence" value="ECO:0007669"/>
    <property type="project" value="InterPro"/>
</dbReference>
<dbReference type="GO" id="GO:0006122">
    <property type="term" value="P:mitochondrial electron transport, ubiquinol to cytochrome c"/>
    <property type="evidence" value="ECO:0007669"/>
    <property type="project" value="TreeGrafter"/>
</dbReference>
<dbReference type="CDD" id="cd00290">
    <property type="entry name" value="cytochrome_b_C"/>
    <property type="match status" value="1"/>
</dbReference>
<dbReference type="CDD" id="cd00284">
    <property type="entry name" value="Cytochrome_b_N"/>
    <property type="match status" value="1"/>
</dbReference>
<dbReference type="FunFam" id="1.20.810.10:FF:000002">
    <property type="entry name" value="Cytochrome b"/>
    <property type="match status" value="1"/>
</dbReference>
<dbReference type="Gene3D" id="1.20.810.10">
    <property type="entry name" value="Cytochrome Bc1 Complex, Chain C"/>
    <property type="match status" value="1"/>
</dbReference>
<dbReference type="InterPro" id="IPR005798">
    <property type="entry name" value="Cyt_b/b6_C"/>
</dbReference>
<dbReference type="InterPro" id="IPR036150">
    <property type="entry name" value="Cyt_b/b6_C_sf"/>
</dbReference>
<dbReference type="InterPro" id="IPR005797">
    <property type="entry name" value="Cyt_b/b6_N"/>
</dbReference>
<dbReference type="InterPro" id="IPR027387">
    <property type="entry name" value="Cytb/b6-like_sf"/>
</dbReference>
<dbReference type="InterPro" id="IPR030689">
    <property type="entry name" value="Cytochrome_b"/>
</dbReference>
<dbReference type="InterPro" id="IPR048260">
    <property type="entry name" value="Cytochrome_b_C_euk/bac"/>
</dbReference>
<dbReference type="InterPro" id="IPR048259">
    <property type="entry name" value="Cytochrome_b_N_euk/bac"/>
</dbReference>
<dbReference type="InterPro" id="IPR016174">
    <property type="entry name" value="Di-haem_cyt_TM"/>
</dbReference>
<dbReference type="PANTHER" id="PTHR19271">
    <property type="entry name" value="CYTOCHROME B"/>
    <property type="match status" value="1"/>
</dbReference>
<dbReference type="PANTHER" id="PTHR19271:SF16">
    <property type="entry name" value="CYTOCHROME B"/>
    <property type="match status" value="1"/>
</dbReference>
<dbReference type="Pfam" id="PF00032">
    <property type="entry name" value="Cytochrom_B_C"/>
    <property type="match status" value="1"/>
</dbReference>
<dbReference type="Pfam" id="PF00033">
    <property type="entry name" value="Cytochrome_B"/>
    <property type="match status" value="1"/>
</dbReference>
<dbReference type="PIRSF" id="PIRSF038885">
    <property type="entry name" value="COB"/>
    <property type="match status" value="1"/>
</dbReference>
<dbReference type="SUPFAM" id="SSF81648">
    <property type="entry name" value="a domain/subunit of cytochrome bc1 complex (Ubiquinol-cytochrome c reductase)"/>
    <property type="match status" value="1"/>
</dbReference>
<dbReference type="SUPFAM" id="SSF81342">
    <property type="entry name" value="Transmembrane di-heme cytochromes"/>
    <property type="match status" value="1"/>
</dbReference>
<dbReference type="PROSITE" id="PS51003">
    <property type="entry name" value="CYTB_CTER"/>
    <property type="match status" value="1"/>
</dbReference>
<dbReference type="PROSITE" id="PS51002">
    <property type="entry name" value="CYTB_NTER"/>
    <property type="match status" value="1"/>
</dbReference>
<proteinExistence type="inferred from homology"/>